<proteinExistence type="evidence at protein level"/>
<name>VSPE2_GLOUS</name>
<comment type="function">
    <text evidence="4 5 6">Thrombin-like snake venom serine protease that cleaves fibrinogen beta (FGB) releasing fibrinopeptide B. Promotes capillary permeability-increasing activity through the release of peptides from the beta-chain of fibrinogen.</text>
</comment>
<comment type="subunit">
    <text>Monomer.</text>
</comment>
<comment type="subcellular location">
    <subcellularLocation>
        <location>Secreted</location>
    </subcellularLocation>
</comment>
<comment type="tissue specificity">
    <text>Expressed by the venom gland.</text>
</comment>
<comment type="PTM">
    <text>N-glycosylated.</text>
</comment>
<comment type="similarity">
    <text evidence="3">Belongs to the peptidase S1 family. Snake venom subfamily.</text>
</comment>
<feature type="signal peptide" evidence="1">
    <location>
        <begin position="1"/>
        <end position="18"/>
    </location>
</feature>
<feature type="propeptide" id="PRO_0000028371" evidence="5">
    <location>
        <begin position="19"/>
        <end position="24"/>
    </location>
</feature>
<feature type="chain" id="PRO_0000028372" description="Thrombin-like enzyme CPI-enzyme 2">
    <location>
        <begin position="25"/>
        <end position="258"/>
    </location>
</feature>
<feature type="domain" description="Peptidase S1" evidence="3">
    <location>
        <begin position="25"/>
        <end position="249"/>
    </location>
</feature>
<feature type="active site" description="Charge relay system" evidence="1">
    <location>
        <position position="65"/>
    </location>
</feature>
<feature type="active site" description="Charge relay system" evidence="1">
    <location>
        <position position="110"/>
    </location>
</feature>
<feature type="active site" description="Charge relay system" evidence="1">
    <location>
        <position position="204"/>
    </location>
</feature>
<feature type="glycosylation site" description="N-linked (GlcNAc...) asparagine" evidence="2">
    <location>
        <position position="44"/>
    </location>
</feature>
<feature type="glycosylation site" description="N-linked (GlcNAc...) asparagine" evidence="2">
    <location>
        <position position="79"/>
    </location>
</feature>
<feature type="glycosylation site" description="N-linked (GlcNAc...) asparagine" evidence="2">
    <location>
        <position position="103"/>
    </location>
</feature>
<feature type="glycosylation site" description="N-linked (GlcNAc...) asparagine" evidence="2">
    <location>
        <position position="121"/>
    </location>
</feature>
<feature type="disulfide bond" evidence="3">
    <location>
        <begin position="31"/>
        <end position="163"/>
    </location>
</feature>
<feature type="disulfide bond" evidence="3">
    <location>
        <begin position="50"/>
        <end position="66"/>
    </location>
</feature>
<feature type="disulfide bond" evidence="3">
    <location>
        <begin position="98"/>
        <end position="256"/>
    </location>
</feature>
<feature type="disulfide bond" evidence="3">
    <location>
        <begin position="142"/>
        <end position="210"/>
    </location>
</feature>
<feature type="disulfide bond" evidence="3">
    <location>
        <begin position="174"/>
        <end position="189"/>
    </location>
</feature>
<feature type="disulfide bond" evidence="3">
    <location>
        <begin position="200"/>
        <end position="225"/>
    </location>
</feature>
<reference key="1">
    <citation type="journal article" date="1998" name="Toxicon">
        <title>Molecular cloning of capillary permeability-increasing enzyme-2 from Agkistrodon caliginosus (Korean viper).</title>
        <authorList>
            <person name="Hahn B.-S."/>
            <person name="Baek K."/>
            <person name="Kim W.-S."/>
            <person name="Lee C.-S."/>
            <person name="Chang I.-L."/>
            <person name="Kim Y.-S."/>
        </authorList>
    </citation>
    <scope>NUCLEOTIDE SEQUENCE [MRNA]</scope>
    <source>
        <tissue>Venom gland</tissue>
    </source>
</reference>
<reference key="2">
    <citation type="journal article" date="1993" name="Toxicon">
        <title>Some properties of a capillary permeability-increasing enzyme-2 from the venom of Agkistrodon caliginosus (Kankoku-mamushi).</title>
        <authorList>
            <person name="Shimokawa K."/>
            <person name="Takahashi H."/>
        </authorList>
    </citation>
    <scope>PROTEIN SEQUENCE OF 25-64</scope>
    <scope>FUNCTION</scope>
    <source>
        <tissue>Venom</tissue>
    </source>
</reference>
<reference key="3">
    <citation type="journal article" date="1993" name="Toxicon">
        <title>Purification of a capillary permeability-increasing enzyme-2 from the venom of Agkistrodon caliginosus (Kankoku-mamushi).</title>
        <authorList>
            <person name="Shimokawa K."/>
            <person name="Takahashi H."/>
        </authorList>
    </citation>
    <scope>FUNCTION</scope>
    <source>
        <tissue>Venom</tissue>
    </source>
</reference>
<reference key="4">
    <citation type="journal article" date="1997" name="Toxicon">
        <title>Capillary permeability-increasing enzyme-2 from the venom of Agkistrodon caliginosus (Kankoku-mamushi): activity resulting from the release of peptides from fibrinogen.</title>
        <authorList>
            <person name="Shimokawa K."/>
            <person name="Takahashi H."/>
        </authorList>
    </citation>
    <scope>FUNCTION</scope>
    <source>
        <tissue>Venom</tissue>
    </source>
</reference>
<accession>O42207</accession>
<dbReference type="EC" id="3.4.21.-"/>
<dbReference type="EMBL" id="AF018568">
    <property type="protein sequence ID" value="AAB70575.1"/>
    <property type="molecule type" value="mRNA"/>
</dbReference>
<dbReference type="SMR" id="O42207"/>
<dbReference type="MEROPS" id="S01.188"/>
<dbReference type="GO" id="GO:0005576">
    <property type="term" value="C:extracellular region"/>
    <property type="evidence" value="ECO:0007669"/>
    <property type="project" value="UniProtKB-SubCell"/>
</dbReference>
<dbReference type="GO" id="GO:0030141">
    <property type="term" value="C:secretory granule"/>
    <property type="evidence" value="ECO:0007669"/>
    <property type="project" value="TreeGrafter"/>
</dbReference>
<dbReference type="GO" id="GO:0004252">
    <property type="term" value="F:serine-type endopeptidase activity"/>
    <property type="evidence" value="ECO:0007669"/>
    <property type="project" value="InterPro"/>
</dbReference>
<dbReference type="GO" id="GO:0090729">
    <property type="term" value="F:toxin activity"/>
    <property type="evidence" value="ECO:0007669"/>
    <property type="project" value="UniProtKB-KW"/>
</dbReference>
<dbReference type="GO" id="GO:0006508">
    <property type="term" value="P:proteolysis"/>
    <property type="evidence" value="ECO:0007669"/>
    <property type="project" value="UniProtKB-KW"/>
</dbReference>
<dbReference type="CDD" id="cd00190">
    <property type="entry name" value="Tryp_SPc"/>
    <property type="match status" value="1"/>
</dbReference>
<dbReference type="FunFam" id="2.40.10.10:FF:000010">
    <property type="entry name" value="Kallikrein related peptidase 11"/>
    <property type="match status" value="1"/>
</dbReference>
<dbReference type="Gene3D" id="2.40.10.10">
    <property type="entry name" value="Trypsin-like serine proteases"/>
    <property type="match status" value="2"/>
</dbReference>
<dbReference type="InterPro" id="IPR009003">
    <property type="entry name" value="Peptidase_S1_PA"/>
</dbReference>
<dbReference type="InterPro" id="IPR043504">
    <property type="entry name" value="Peptidase_S1_PA_chymotrypsin"/>
</dbReference>
<dbReference type="InterPro" id="IPR001314">
    <property type="entry name" value="Peptidase_S1A"/>
</dbReference>
<dbReference type="InterPro" id="IPR001254">
    <property type="entry name" value="Trypsin_dom"/>
</dbReference>
<dbReference type="InterPro" id="IPR018114">
    <property type="entry name" value="TRYPSIN_HIS"/>
</dbReference>
<dbReference type="InterPro" id="IPR033116">
    <property type="entry name" value="TRYPSIN_SER"/>
</dbReference>
<dbReference type="PANTHER" id="PTHR24271:SF47">
    <property type="entry name" value="KALLIKREIN-1"/>
    <property type="match status" value="1"/>
</dbReference>
<dbReference type="PANTHER" id="PTHR24271">
    <property type="entry name" value="KALLIKREIN-RELATED"/>
    <property type="match status" value="1"/>
</dbReference>
<dbReference type="Pfam" id="PF00089">
    <property type="entry name" value="Trypsin"/>
    <property type="match status" value="1"/>
</dbReference>
<dbReference type="PRINTS" id="PR00722">
    <property type="entry name" value="CHYMOTRYPSIN"/>
</dbReference>
<dbReference type="SMART" id="SM00020">
    <property type="entry name" value="Tryp_SPc"/>
    <property type="match status" value="1"/>
</dbReference>
<dbReference type="SUPFAM" id="SSF50494">
    <property type="entry name" value="Trypsin-like serine proteases"/>
    <property type="match status" value="1"/>
</dbReference>
<dbReference type="PROSITE" id="PS50240">
    <property type="entry name" value="TRYPSIN_DOM"/>
    <property type="match status" value="1"/>
</dbReference>
<dbReference type="PROSITE" id="PS00134">
    <property type="entry name" value="TRYPSIN_HIS"/>
    <property type="match status" value="1"/>
</dbReference>
<dbReference type="PROSITE" id="PS00135">
    <property type="entry name" value="TRYPSIN_SER"/>
    <property type="match status" value="1"/>
</dbReference>
<evidence type="ECO:0000250" key="1"/>
<evidence type="ECO:0000255" key="2"/>
<evidence type="ECO:0000255" key="3">
    <source>
        <dbReference type="PROSITE-ProRule" id="PRU00274"/>
    </source>
</evidence>
<evidence type="ECO:0000269" key="4">
    <source>
    </source>
</evidence>
<evidence type="ECO:0000269" key="5">
    <source>
    </source>
</evidence>
<evidence type="ECO:0000269" key="6">
    <source>
    </source>
</evidence>
<sequence length="258" mass="28523">MVLIRVLANLLILQLSYAQKSSELVIGGDECNINEHRFLALVFNSSGFLCSGTLINQEWVLTAAHCDMENMRIYLGVHNESVQYDDEQTRVPEEKFFCLRSNNDTKWDKDIMLIRLDSPVNNSAHIAPLNLPFNPPMLGSVCRIMGWGAITSPNEIYSSVPHCANINVLHYSMCRAVYPGMPAQTRILCAGIQTGGIDTCSGDSGGPLICNGQFQGIVSWGRYPCAKPRAPGLYTRVFDYTDWIENIIAGNTDASCPP</sequence>
<protein>
    <recommendedName>
        <fullName>Thrombin-like enzyme CPI-enzyme 2</fullName>
        <shortName>SVTLE</shortName>
        <ecNumber>3.4.21.-</ecNumber>
    </recommendedName>
    <alternativeName>
        <fullName>Capillary permeability-increasing enzyme 2</fullName>
    </alternativeName>
</protein>
<organism>
    <name type="scientific">Gloydius ussuriensis</name>
    <name type="common">Ussuri mamushi</name>
    <name type="synonym">Gloydius blomhoffii ussuriensis</name>
    <dbReference type="NCBI Taxonomy" id="35671"/>
    <lineage>
        <taxon>Eukaryota</taxon>
        <taxon>Metazoa</taxon>
        <taxon>Chordata</taxon>
        <taxon>Craniata</taxon>
        <taxon>Vertebrata</taxon>
        <taxon>Euteleostomi</taxon>
        <taxon>Lepidosauria</taxon>
        <taxon>Squamata</taxon>
        <taxon>Bifurcata</taxon>
        <taxon>Unidentata</taxon>
        <taxon>Episquamata</taxon>
        <taxon>Toxicofera</taxon>
        <taxon>Serpentes</taxon>
        <taxon>Colubroidea</taxon>
        <taxon>Viperidae</taxon>
        <taxon>Crotalinae</taxon>
        <taxon>Gloydius</taxon>
    </lineage>
</organism>
<keyword id="KW-1204">Blood coagulation cascade activating toxin</keyword>
<keyword id="KW-0903">Direct protein sequencing</keyword>
<keyword id="KW-1015">Disulfide bond</keyword>
<keyword id="KW-0325">Glycoprotein</keyword>
<keyword id="KW-1199">Hemostasis impairing toxin</keyword>
<keyword id="KW-0378">Hydrolase</keyword>
<keyword id="KW-0645">Protease</keyword>
<keyword id="KW-0964">Secreted</keyword>
<keyword id="KW-0720">Serine protease</keyword>
<keyword id="KW-0732">Signal</keyword>
<keyword id="KW-0800">Toxin</keyword>
<keyword id="KW-0865">Zymogen</keyword>